<dbReference type="EMBL" id="CP001287">
    <property type="protein sequence ID" value="ACK67052.1"/>
    <property type="molecule type" value="Genomic_DNA"/>
</dbReference>
<dbReference type="RefSeq" id="WP_012596313.1">
    <property type="nucleotide sequence ID" value="NC_011726.1"/>
</dbReference>
<dbReference type="SMR" id="B7JX64"/>
<dbReference type="STRING" id="41431.PCC8801_3071"/>
<dbReference type="KEGG" id="cyp:PCC8801_3071"/>
<dbReference type="eggNOG" id="COG1327">
    <property type="taxonomic scope" value="Bacteria"/>
</dbReference>
<dbReference type="HOGENOM" id="CLU_108412_0_0_3"/>
<dbReference type="OrthoDB" id="9807461at2"/>
<dbReference type="Proteomes" id="UP000008204">
    <property type="component" value="Chromosome"/>
</dbReference>
<dbReference type="GO" id="GO:0005524">
    <property type="term" value="F:ATP binding"/>
    <property type="evidence" value="ECO:0007669"/>
    <property type="project" value="UniProtKB-KW"/>
</dbReference>
<dbReference type="GO" id="GO:0003677">
    <property type="term" value="F:DNA binding"/>
    <property type="evidence" value="ECO:0007669"/>
    <property type="project" value="UniProtKB-KW"/>
</dbReference>
<dbReference type="GO" id="GO:0008270">
    <property type="term" value="F:zinc ion binding"/>
    <property type="evidence" value="ECO:0007669"/>
    <property type="project" value="UniProtKB-UniRule"/>
</dbReference>
<dbReference type="GO" id="GO:0045892">
    <property type="term" value="P:negative regulation of DNA-templated transcription"/>
    <property type="evidence" value="ECO:0007669"/>
    <property type="project" value="UniProtKB-UniRule"/>
</dbReference>
<dbReference type="HAMAP" id="MF_00440">
    <property type="entry name" value="NrdR"/>
    <property type="match status" value="1"/>
</dbReference>
<dbReference type="InterPro" id="IPR005144">
    <property type="entry name" value="ATP-cone_dom"/>
</dbReference>
<dbReference type="InterPro" id="IPR055173">
    <property type="entry name" value="NrdR-like_N"/>
</dbReference>
<dbReference type="InterPro" id="IPR003796">
    <property type="entry name" value="RNR_NrdR-like"/>
</dbReference>
<dbReference type="NCBIfam" id="TIGR00244">
    <property type="entry name" value="transcriptional regulator NrdR"/>
    <property type="match status" value="1"/>
</dbReference>
<dbReference type="PANTHER" id="PTHR30455">
    <property type="entry name" value="TRANSCRIPTIONAL REPRESSOR NRDR"/>
    <property type="match status" value="1"/>
</dbReference>
<dbReference type="PANTHER" id="PTHR30455:SF2">
    <property type="entry name" value="TRANSCRIPTIONAL REPRESSOR NRDR"/>
    <property type="match status" value="1"/>
</dbReference>
<dbReference type="Pfam" id="PF03477">
    <property type="entry name" value="ATP-cone"/>
    <property type="match status" value="1"/>
</dbReference>
<dbReference type="Pfam" id="PF22811">
    <property type="entry name" value="Zn_ribbon_NrdR"/>
    <property type="match status" value="1"/>
</dbReference>
<dbReference type="PROSITE" id="PS51161">
    <property type="entry name" value="ATP_CONE"/>
    <property type="match status" value="1"/>
</dbReference>
<evidence type="ECO:0000255" key="1">
    <source>
        <dbReference type="HAMAP-Rule" id="MF_00440"/>
    </source>
</evidence>
<evidence type="ECO:0000256" key="2">
    <source>
        <dbReference type="SAM" id="MobiDB-lite"/>
    </source>
</evidence>
<protein>
    <recommendedName>
        <fullName evidence="1">Transcriptional repressor NrdR</fullName>
    </recommendedName>
</protein>
<proteinExistence type="inferred from homology"/>
<keyword id="KW-0067">ATP-binding</keyword>
<keyword id="KW-0238">DNA-binding</keyword>
<keyword id="KW-0479">Metal-binding</keyword>
<keyword id="KW-0547">Nucleotide-binding</keyword>
<keyword id="KW-1185">Reference proteome</keyword>
<keyword id="KW-0678">Repressor</keyword>
<keyword id="KW-0804">Transcription</keyword>
<keyword id="KW-0805">Transcription regulation</keyword>
<keyword id="KW-0862">Zinc</keyword>
<keyword id="KW-0863">Zinc-finger</keyword>
<comment type="function">
    <text evidence="1">Negatively regulates transcription of bacterial ribonucleotide reductase nrd genes and operons by binding to NrdR-boxes.</text>
</comment>
<comment type="cofactor">
    <cofactor evidence="1">
        <name>Zn(2+)</name>
        <dbReference type="ChEBI" id="CHEBI:29105"/>
    </cofactor>
    <text evidence="1">Binds 1 zinc ion.</text>
</comment>
<comment type="similarity">
    <text evidence="1">Belongs to the NrdR family.</text>
</comment>
<name>NRDR_RIPO1</name>
<feature type="chain" id="PRO_1000124492" description="Transcriptional repressor NrdR">
    <location>
        <begin position="1"/>
        <end position="179"/>
    </location>
</feature>
<feature type="domain" description="ATP-cone" evidence="1">
    <location>
        <begin position="49"/>
        <end position="139"/>
    </location>
</feature>
<feature type="zinc finger region" evidence="1">
    <location>
        <begin position="3"/>
        <end position="34"/>
    </location>
</feature>
<feature type="region of interest" description="Disordered" evidence="2">
    <location>
        <begin position="160"/>
        <end position="179"/>
    </location>
</feature>
<feature type="compositionally biased region" description="Polar residues" evidence="2">
    <location>
        <begin position="169"/>
        <end position="179"/>
    </location>
</feature>
<organism>
    <name type="scientific">Rippkaea orientalis (strain PCC 8801 / RF-1)</name>
    <name type="common">Cyanothece sp. (strain PCC 8801)</name>
    <dbReference type="NCBI Taxonomy" id="41431"/>
    <lineage>
        <taxon>Bacteria</taxon>
        <taxon>Bacillati</taxon>
        <taxon>Cyanobacteriota</taxon>
        <taxon>Cyanophyceae</taxon>
        <taxon>Oscillatoriophycideae</taxon>
        <taxon>Chroococcales</taxon>
        <taxon>Aphanothecaceae</taxon>
        <taxon>Rippkaea</taxon>
        <taxon>Rippkaea orientalis</taxon>
    </lineage>
</organism>
<sequence>MQCPYCQHTNSRVLESRSSEGGQSIRRRRECLCCKHRFTTYERIEFVPITVIKHDGKKESFDPSKLLRGMVRACEKTGISYQKLETIVDDIEAQLQQRTQREVTSQEIGQLVLKYLRQENEVAYIRFASVYGRFQGIKDFVDTLKQLQEEDLVPSETIWKPANDDFSEQETPSTVMMPS</sequence>
<reference key="1">
    <citation type="journal article" date="2011" name="MBio">
        <title>Novel metabolic attributes of the genus Cyanothece, comprising a group of unicellular nitrogen-fixing Cyanobacteria.</title>
        <authorList>
            <person name="Bandyopadhyay A."/>
            <person name="Elvitigala T."/>
            <person name="Welsh E."/>
            <person name="Stockel J."/>
            <person name="Liberton M."/>
            <person name="Min H."/>
            <person name="Sherman L.A."/>
            <person name="Pakrasi H.B."/>
        </authorList>
    </citation>
    <scope>NUCLEOTIDE SEQUENCE [LARGE SCALE GENOMIC DNA]</scope>
    <source>
        <strain>PCC 8801 / RF-1</strain>
    </source>
</reference>
<gene>
    <name evidence="1" type="primary">nrdR</name>
    <name type="ordered locus">PCC8801_3071</name>
</gene>
<accession>B7JX64</accession>